<proteinExistence type="inferred from homology"/>
<name>LPXC_HAEI8</name>
<reference key="1">
    <citation type="journal article" date="2005" name="J. Bacteriol.">
        <title>Genomic sequence of an otitis media isolate of nontypeable Haemophilus influenzae: comparative study with H. influenzae serotype d, strain KW20.</title>
        <authorList>
            <person name="Harrison A."/>
            <person name="Dyer D.W."/>
            <person name="Gillaspy A."/>
            <person name="Ray W.C."/>
            <person name="Mungur R."/>
            <person name="Carson M.B."/>
            <person name="Zhong H."/>
            <person name="Gipson J."/>
            <person name="Gipson M."/>
            <person name="Johnson L.S."/>
            <person name="Lewis L."/>
            <person name="Bakaletz L.O."/>
            <person name="Munson R.S. Jr."/>
        </authorList>
    </citation>
    <scope>NUCLEOTIDE SEQUENCE [LARGE SCALE GENOMIC DNA]</scope>
    <source>
        <strain>86-028NP</strain>
    </source>
</reference>
<accession>Q4QLF2</accession>
<gene>
    <name evidence="1" type="primary">lpxC</name>
    <name type="ordered locus">NTHI1312</name>
</gene>
<evidence type="ECO:0000255" key="1">
    <source>
        <dbReference type="HAMAP-Rule" id="MF_00388"/>
    </source>
</evidence>
<protein>
    <recommendedName>
        <fullName evidence="1">UDP-3-O-acyl-N-acetylglucosamine deacetylase</fullName>
        <shortName evidence="1">UDP-3-O-acyl-GlcNAc deacetylase</shortName>
        <ecNumber evidence="1">3.5.1.108</ecNumber>
    </recommendedName>
    <alternativeName>
        <fullName evidence="1">UDP-3-O-[R-3-hydroxymyristoyl]-N-acetylglucosamine deacetylase</fullName>
    </alternativeName>
</protein>
<sequence>MIKQRTLKQSIKVTGVGLHSGNKVTLTLRPAMPNTGVVYYRTDLNPAVAFPADPNSVRDTMLCTALINDQGVRISTVEHLNAALAGLGIDNIIIEVDAPEIPIMDGSASPFIYLLLDAGIEEQNAAKKFIRIKEYVRVEDGDKWAEFKPYNGFRLDFTIDFDHPAIGKDVRNYEMNFSAQAFVHQISRARTFGFMKDIEYLQSQGLALGGSLDNAIVLDDYRILNEDGLRFKDELVRHKMLDAIGDLYMAGYNIIGDFKAYKSGHGLNNKLLRAVLANQEAWEFVTFEDKEQVPQGYVAPAQVLI</sequence>
<organism>
    <name type="scientific">Haemophilus influenzae (strain 86-028NP)</name>
    <dbReference type="NCBI Taxonomy" id="281310"/>
    <lineage>
        <taxon>Bacteria</taxon>
        <taxon>Pseudomonadati</taxon>
        <taxon>Pseudomonadota</taxon>
        <taxon>Gammaproteobacteria</taxon>
        <taxon>Pasteurellales</taxon>
        <taxon>Pasteurellaceae</taxon>
        <taxon>Haemophilus</taxon>
    </lineage>
</organism>
<comment type="function">
    <text evidence="1">Catalyzes the hydrolysis of UDP-3-O-myristoyl-N-acetylglucosamine to form UDP-3-O-myristoylglucosamine and acetate, the committed step in lipid A biosynthesis.</text>
</comment>
<comment type="catalytic activity">
    <reaction evidence="1">
        <text>a UDP-3-O-[(3R)-3-hydroxyacyl]-N-acetyl-alpha-D-glucosamine + H2O = a UDP-3-O-[(3R)-3-hydroxyacyl]-alpha-D-glucosamine + acetate</text>
        <dbReference type="Rhea" id="RHEA:67816"/>
        <dbReference type="ChEBI" id="CHEBI:15377"/>
        <dbReference type="ChEBI" id="CHEBI:30089"/>
        <dbReference type="ChEBI" id="CHEBI:137740"/>
        <dbReference type="ChEBI" id="CHEBI:173225"/>
        <dbReference type="EC" id="3.5.1.108"/>
    </reaction>
</comment>
<comment type="cofactor">
    <cofactor evidence="1">
        <name>Zn(2+)</name>
        <dbReference type="ChEBI" id="CHEBI:29105"/>
    </cofactor>
</comment>
<comment type="pathway">
    <text evidence="1">Glycolipid biosynthesis; lipid IV(A) biosynthesis; lipid IV(A) from (3R)-3-hydroxytetradecanoyl-[acyl-carrier-protein] and UDP-N-acetyl-alpha-D-glucosamine: step 2/6.</text>
</comment>
<comment type="similarity">
    <text evidence="1">Belongs to the LpxC family.</text>
</comment>
<dbReference type="EC" id="3.5.1.108" evidence="1"/>
<dbReference type="EMBL" id="CP000057">
    <property type="protein sequence ID" value="AAX88145.1"/>
    <property type="molecule type" value="Genomic_DNA"/>
</dbReference>
<dbReference type="RefSeq" id="WP_011272400.1">
    <property type="nucleotide sequence ID" value="NC_007146.2"/>
</dbReference>
<dbReference type="SMR" id="Q4QLF2"/>
<dbReference type="KEGG" id="hit:NTHI1312"/>
<dbReference type="HOGENOM" id="CLU_046528_1_0_6"/>
<dbReference type="UniPathway" id="UPA00359">
    <property type="reaction ID" value="UER00478"/>
</dbReference>
<dbReference type="Proteomes" id="UP000002525">
    <property type="component" value="Chromosome"/>
</dbReference>
<dbReference type="GO" id="GO:0016020">
    <property type="term" value="C:membrane"/>
    <property type="evidence" value="ECO:0007669"/>
    <property type="project" value="GOC"/>
</dbReference>
<dbReference type="GO" id="GO:0046872">
    <property type="term" value="F:metal ion binding"/>
    <property type="evidence" value="ECO:0007669"/>
    <property type="project" value="UniProtKB-KW"/>
</dbReference>
<dbReference type="GO" id="GO:0103117">
    <property type="term" value="F:UDP-3-O-acyl-N-acetylglucosamine deacetylase activity"/>
    <property type="evidence" value="ECO:0007669"/>
    <property type="project" value="UniProtKB-UniRule"/>
</dbReference>
<dbReference type="GO" id="GO:0009245">
    <property type="term" value="P:lipid A biosynthetic process"/>
    <property type="evidence" value="ECO:0007669"/>
    <property type="project" value="UniProtKB-UniRule"/>
</dbReference>
<dbReference type="FunFam" id="3.30.1700.10:FF:000001">
    <property type="entry name" value="UDP-3-O-acyl-N-acetylglucosamine deacetylase"/>
    <property type="match status" value="1"/>
</dbReference>
<dbReference type="Gene3D" id="3.30.230.20">
    <property type="entry name" value="lpxc deacetylase, domain 1"/>
    <property type="match status" value="1"/>
</dbReference>
<dbReference type="Gene3D" id="3.30.1700.10">
    <property type="entry name" value="lpxc deacetylase, domain 2"/>
    <property type="match status" value="1"/>
</dbReference>
<dbReference type="HAMAP" id="MF_00388">
    <property type="entry name" value="LpxC"/>
    <property type="match status" value="1"/>
</dbReference>
<dbReference type="InterPro" id="IPR020568">
    <property type="entry name" value="Ribosomal_Su5_D2-typ_SF"/>
</dbReference>
<dbReference type="InterPro" id="IPR004463">
    <property type="entry name" value="UDP-acyl_GlcNac_deAcase"/>
</dbReference>
<dbReference type="InterPro" id="IPR011334">
    <property type="entry name" value="UDP-acyl_GlcNac_deAcase_C"/>
</dbReference>
<dbReference type="InterPro" id="IPR015870">
    <property type="entry name" value="UDP-acyl_N-AcGlcN_deAcase_N"/>
</dbReference>
<dbReference type="NCBIfam" id="TIGR00325">
    <property type="entry name" value="lpxC"/>
    <property type="match status" value="1"/>
</dbReference>
<dbReference type="PANTHER" id="PTHR33694">
    <property type="entry name" value="UDP-3-O-ACYL-N-ACETYLGLUCOSAMINE DEACETYLASE 1, MITOCHONDRIAL-RELATED"/>
    <property type="match status" value="1"/>
</dbReference>
<dbReference type="PANTHER" id="PTHR33694:SF1">
    <property type="entry name" value="UDP-3-O-ACYL-N-ACETYLGLUCOSAMINE DEACETYLASE 1, MITOCHONDRIAL-RELATED"/>
    <property type="match status" value="1"/>
</dbReference>
<dbReference type="Pfam" id="PF03331">
    <property type="entry name" value="LpxC"/>
    <property type="match status" value="1"/>
</dbReference>
<dbReference type="SUPFAM" id="SSF54211">
    <property type="entry name" value="Ribosomal protein S5 domain 2-like"/>
    <property type="match status" value="2"/>
</dbReference>
<feature type="chain" id="PRO_0000253667" description="UDP-3-O-acyl-N-acetylglucosamine deacetylase">
    <location>
        <begin position="1"/>
        <end position="305"/>
    </location>
</feature>
<feature type="active site" description="Proton donor" evidence="1">
    <location>
        <position position="265"/>
    </location>
</feature>
<feature type="binding site" evidence="1">
    <location>
        <position position="79"/>
    </location>
    <ligand>
        <name>Zn(2+)</name>
        <dbReference type="ChEBI" id="CHEBI:29105"/>
    </ligand>
</feature>
<feature type="binding site" evidence="1">
    <location>
        <position position="238"/>
    </location>
    <ligand>
        <name>Zn(2+)</name>
        <dbReference type="ChEBI" id="CHEBI:29105"/>
    </ligand>
</feature>
<feature type="binding site" evidence="1">
    <location>
        <position position="242"/>
    </location>
    <ligand>
        <name>Zn(2+)</name>
        <dbReference type="ChEBI" id="CHEBI:29105"/>
    </ligand>
</feature>
<keyword id="KW-0378">Hydrolase</keyword>
<keyword id="KW-0441">Lipid A biosynthesis</keyword>
<keyword id="KW-0444">Lipid biosynthesis</keyword>
<keyword id="KW-0443">Lipid metabolism</keyword>
<keyword id="KW-0479">Metal-binding</keyword>
<keyword id="KW-0862">Zinc</keyword>